<sequence length="346" mass="37931">MQSITIRRPDDWHLHLRDGAMLEGVIADTSRTFARAIIMPNLVPPVVTTSDATAYRERILKALPAGHRFQPLMTLYLTEHTSPDDVEAGARSGLITAVKLYPAGATTNSHGGVRDMEKAMPVLERMAAIGLPLCVHGEVTTPEVDIFDREAVFIDTVLDPLRRRLPELKVTMEHVTTSDGIDYIKAAKANLAGSITSHHLIINRNAILVGGIRPHYYCLPVAKRENHRLALRAAAVSGDARFFLGTDSAPHVDPLKECACGCAGIYTSINTMSCLAHVFEEEDALDRLEAFTSLNGPAWYGLQPNEERITLSRQAEPVVFPAKIETGAGSVTVFDPMYPLHWHVVA</sequence>
<name>PYRC_RHILW</name>
<evidence type="ECO:0000255" key="1">
    <source>
        <dbReference type="HAMAP-Rule" id="MF_00219"/>
    </source>
</evidence>
<protein>
    <recommendedName>
        <fullName evidence="1">Dihydroorotase</fullName>
        <shortName evidence="1">DHOase</shortName>
        <ecNumber evidence="1">3.5.2.3</ecNumber>
    </recommendedName>
</protein>
<organism>
    <name type="scientific">Rhizobium leguminosarum bv. trifolii (strain WSM2304)</name>
    <dbReference type="NCBI Taxonomy" id="395492"/>
    <lineage>
        <taxon>Bacteria</taxon>
        <taxon>Pseudomonadati</taxon>
        <taxon>Pseudomonadota</taxon>
        <taxon>Alphaproteobacteria</taxon>
        <taxon>Hyphomicrobiales</taxon>
        <taxon>Rhizobiaceae</taxon>
        <taxon>Rhizobium/Agrobacterium group</taxon>
        <taxon>Rhizobium</taxon>
    </lineage>
</organism>
<accession>B5ZNS1</accession>
<proteinExistence type="inferred from homology"/>
<reference key="1">
    <citation type="journal article" date="2010" name="Stand. Genomic Sci.">
        <title>Complete genome sequence of Rhizobium leguminosarum bv trifolii strain WSM2304, an effective microsymbiont of the South American clover Trifolium polymorphum.</title>
        <authorList>
            <person name="Reeve W."/>
            <person name="O'Hara G."/>
            <person name="Chain P."/>
            <person name="Ardley J."/>
            <person name="Brau L."/>
            <person name="Nandesena K."/>
            <person name="Tiwari R."/>
            <person name="Malfatti S."/>
            <person name="Kiss H."/>
            <person name="Lapidus A."/>
            <person name="Copeland A."/>
            <person name="Nolan M."/>
            <person name="Land M."/>
            <person name="Ivanova N."/>
            <person name="Mavromatis K."/>
            <person name="Markowitz V."/>
            <person name="Kyrpides N."/>
            <person name="Melino V."/>
            <person name="Denton M."/>
            <person name="Yates R."/>
            <person name="Howieson J."/>
        </authorList>
    </citation>
    <scope>NUCLEOTIDE SEQUENCE [LARGE SCALE GENOMIC DNA]</scope>
    <source>
        <strain>WSM2304</strain>
    </source>
</reference>
<comment type="function">
    <text evidence="1">Catalyzes the reversible cyclization of carbamoyl aspartate to dihydroorotate.</text>
</comment>
<comment type="catalytic activity">
    <reaction evidence="1">
        <text>(S)-dihydroorotate + H2O = N-carbamoyl-L-aspartate + H(+)</text>
        <dbReference type="Rhea" id="RHEA:24296"/>
        <dbReference type="ChEBI" id="CHEBI:15377"/>
        <dbReference type="ChEBI" id="CHEBI:15378"/>
        <dbReference type="ChEBI" id="CHEBI:30864"/>
        <dbReference type="ChEBI" id="CHEBI:32814"/>
        <dbReference type="EC" id="3.5.2.3"/>
    </reaction>
</comment>
<comment type="cofactor">
    <cofactor evidence="1">
        <name>Zn(2+)</name>
        <dbReference type="ChEBI" id="CHEBI:29105"/>
    </cofactor>
    <text evidence="1">Binds 2 Zn(2+) ions per subunit.</text>
</comment>
<comment type="pathway">
    <text evidence="1">Pyrimidine metabolism; UMP biosynthesis via de novo pathway; (S)-dihydroorotate from bicarbonate: step 3/3.</text>
</comment>
<comment type="subunit">
    <text evidence="1">Homodimer.</text>
</comment>
<comment type="similarity">
    <text evidence="1">Belongs to the metallo-dependent hydrolases superfamily. DHOase family. Class II DHOase subfamily.</text>
</comment>
<feature type="chain" id="PRO_1000100054" description="Dihydroorotase">
    <location>
        <begin position="1"/>
        <end position="346"/>
    </location>
</feature>
<feature type="active site" evidence="1">
    <location>
        <position position="247"/>
    </location>
</feature>
<feature type="binding site" evidence="1">
    <location>
        <position position="13"/>
    </location>
    <ligand>
        <name>Zn(2+)</name>
        <dbReference type="ChEBI" id="CHEBI:29105"/>
        <label>1</label>
    </ligand>
</feature>
<feature type="binding site" evidence="1">
    <location>
        <begin position="15"/>
        <end position="17"/>
    </location>
    <ligand>
        <name>substrate</name>
    </ligand>
</feature>
<feature type="binding site" evidence="1">
    <location>
        <position position="15"/>
    </location>
    <ligand>
        <name>Zn(2+)</name>
        <dbReference type="ChEBI" id="CHEBI:29105"/>
        <label>1</label>
    </ligand>
</feature>
<feature type="binding site" evidence="1">
    <location>
        <position position="41"/>
    </location>
    <ligand>
        <name>substrate</name>
    </ligand>
</feature>
<feature type="binding site" description="via carbamate group" evidence="1">
    <location>
        <position position="99"/>
    </location>
    <ligand>
        <name>Zn(2+)</name>
        <dbReference type="ChEBI" id="CHEBI:29105"/>
        <label>1</label>
    </ligand>
</feature>
<feature type="binding site" description="via carbamate group" evidence="1">
    <location>
        <position position="99"/>
    </location>
    <ligand>
        <name>Zn(2+)</name>
        <dbReference type="ChEBI" id="CHEBI:29105"/>
        <label>2</label>
    </ligand>
</feature>
<feature type="binding site" evidence="1">
    <location>
        <position position="136"/>
    </location>
    <ligand>
        <name>substrate</name>
    </ligand>
</feature>
<feature type="binding site" evidence="1">
    <location>
        <position position="136"/>
    </location>
    <ligand>
        <name>Zn(2+)</name>
        <dbReference type="ChEBI" id="CHEBI:29105"/>
        <label>2</label>
    </ligand>
</feature>
<feature type="binding site" evidence="1">
    <location>
        <position position="174"/>
    </location>
    <ligand>
        <name>Zn(2+)</name>
        <dbReference type="ChEBI" id="CHEBI:29105"/>
        <label>2</label>
    </ligand>
</feature>
<feature type="binding site" evidence="1">
    <location>
        <position position="219"/>
    </location>
    <ligand>
        <name>substrate</name>
    </ligand>
</feature>
<feature type="binding site" evidence="1">
    <location>
        <position position="247"/>
    </location>
    <ligand>
        <name>Zn(2+)</name>
        <dbReference type="ChEBI" id="CHEBI:29105"/>
        <label>1</label>
    </ligand>
</feature>
<feature type="binding site" evidence="1">
    <location>
        <position position="251"/>
    </location>
    <ligand>
        <name>substrate</name>
    </ligand>
</feature>
<feature type="binding site" evidence="1">
    <location>
        <position position="263"/>
    </location>
    <ligand>
        <name>substrate</name>
    </ligand>
</feature>
<feature type="modified residue" description="N6-carboxylysine" evidence="1">
    <location>
        <position position="99"/>
    </location>
</feature>
<keyword id="KW-0378">Hydrolase</keyword>
<keyword id="KW-0479">Metal-binding</keyword>
<keyword id="KW-0665">Pyrimidine biosynthesis</keyword>
<keyword id="KW-1185">Reference proteome</keyword>
<keyword id="KW-0862">Zinc</keyword>
<dbReference type="EC" id="3.5.2.3" evidence="1"/>
<dbReference type="EMBL" id="CP001191">
    <property type="protein sequence ID" value="ACI53431.1"/>
    <property type="molecule type" value="Genomic_DNA"/>
</dbReference>
<dbReference type="RefSeq" id="WP_012556464.1">
    <property type="nucleotide sequence ID" value="NC_011369.1"/>
</dbReference>
<dbReference type="SMR" id="B5ZNS1"/>
<dbReference type="STRING" id="395492.Rleg2_0129"/>
<dbReference type="KEGG" id="rlt:Rleg2_0129"/>
<dbReference type="eggNOG" id="COG0418">
    <property type="taxonomic scope" value="Bacteria"/>
</dbReference>
<dbReference type="HOGENOM" id="CLU_041558_1_0_5"/>
<dbReference type="UniPathway" id="UPA00070">
    <property type="reaction ID" value="UER00117"/>
</dbReference>
<dbReference type="Proteomes" id="UP000008330">
    <property type="component" value="Chromosome"/>
</dbReference>
<dbReference type="GO" id="GO:0005829">
    <property type="term" value="C:cytosol"/>
    <property type="evidence" value="ECO:0007669"/>
    <property type="project" value="TreeGrafter"/>
</dbReference>
<dbReference type="GO" id="GO:0004151">
    <property type="term" value="F:dihydroorotase activity"/>
    <property type="evidence" value="ECO:0007669"/>
    <property type="project" value="UniProtKB-UniRule"/>
</dbReference>
<dbReference type="GO" id="GO:0008270">
    <property type="term" value="F:zinc ion binding"/>
    <property type="evidence" value="ECO:0007669"/>
    <property type="project" value="UniProtKB-UniRule"/>
</dbReference>
<dbReference type="GO" id="GO:0006207">
    <property type="term" value="P:'de novo' pyrimidine nucleobase biosynthetic process"/>
    <property type="evidence" value="ECO:0007669"/>
    <property type="project" value="TreeGrafter"/>
</dbReference>
<dbReference type="GO" id="GO:0044205">
    <property type="term" value="P:'de novo' UMP biosynthetic process"/>
    <property type="evidence" value="ECO:0007669"/>
    <property type="project" value="UniProtKB-UniRule"/>
</dbReference>
<dbReference type="CDD" id="cd01294">
    <property type="entry name" value="DHOase"/>
    <property type="match status" value="1"/>
</dbReference>
<dbReference type="Gene3D" id="3.20.20.140">
    <property type="entry name" value="Metal-dependent hydrolases"/>
    <property type="match status" value="1"/>
</dbReference>
<dbReference type="HAMAP" id="MF_00219">
    <property type="entry name" value="PyrC_classII"/>
    <property type="match status" value="1"/>
</dbReference>
<dbReference type="InterPro" id="IPR006680">
    <property type="entry name" value="Amidohydro-rel"/>
</dbReference>
<dbReference type="InterPro" id="IPR004721">
    <property type="entry name" value="DHOdimr"/>
</dbReference>
<dbReference type="InterPro" id="IPR002195">
    <property type="entry name" value="Dihydroorotase_CS"/>
</dbReference>
<dbReference type="InterPro" id="IPR032466">
    <property type="entry name" value="Metal_Hydrolase"/>
</dbReference>
<dbReference type="NCBIfam" id="TIGR00856">
    <property type="entry name" value="pyrC_dimer"/>
    <property type="match status" value="1"/>
</dbReference>
<dbReference type="PANTHER" id="PTHR43137">
    <property type="entry name" value="DIHYDROOROTASE"/>
    <property type="match status" value="1"/>
</dbReference>
<dbReference type="PANTHER" id="PTHR43137:SF1">
    <property type="entry name" value="DIHYDROOROTASE"/>
    <property type="match status" value="1"/>
</dbReference>
<dbReference type="Pfam" id="PF01979">
    <property type="entry name" value="Amidohydro_1"/>
    <property type="match status" value="1"/>
</dbReference>
<dbReference type="PIRSF" id="PIRSF001237">
    <property type="entry name" value="DHOdimr"/>
    <property type="match status" value="1"/>
</dbReference>
<dbReference type="SUPFAM" id="SSF51556">
    <property type="entry name" value="Metallo-dependent hydrolases"/>
    <property type="match status" value="1"/>
</dbReference>
<dbReference type="PROSITE" id="PS00482">
    <property type="entry name" value="DIHYDROOROTASE_1"/>
    <property type="match status" value="1"/>
</dbReference>
<dbReference type="PROSITE" id="PS00483">
    <property type="entry name" value="DIHYDROOROTASE_2"/>
    <property type="match status" value="1"/>
</dbReference>
<gene>
    <name evidence="1" type="primary">pyrC</name>
    <name type="ordered locus">Rleg2_0129</name>
</gene>